<feature type="transit peptide" description="Mitochondrion" evidence="3">
    <location>
        <begin position="1"/>
        <end status="unknown"/>
    </location>
</feature>
<feature type="chain" id="PRO_0000030293" description="Thioredoxin reductase 2, mitochondrial">
    <location>
        <begin status="unknown"/>
        <end position="516"/>
    </location>
</feature>
<feature type="active site" description="Proton acceptor" evidence="1">
    <location>
        <position position="489"/>
    </location>
</feature>
<feature type="binding site" evidence="1">
    <location>
        <begin position="62"/>
        <end position="79"/>
    </location>
    <ligand>
        <name>FAD</name>
        <dbReference type="ChEBI" id="CHEBI:57692"/>
    </ligand>
</feature>
<feature type="disulfide bond" description="Redox-active" evidence="1">
    <location>
        <begin position="79"/>
        <end position="84"/>
    </location>
</feature>
<evidence type="ECO:0000250" key="1"/>
<evidence type="ECO:0000250" key="2">
    <source>
        <dbReference type="UniProtKB" id="P91938"/>
    </source>
</evidence>
<evidence type="ECO:0000255" key="3"/>
<evidence type="ECO:0000305" key="4"/>
<evidence type="ECO:0000312" key="5">
    <source>
        <dbReference type="EMBL" id="AAF64152.1"/>
    </source>
</evidence>
<evidence type="ECO:0000312" key="6">
    <source>
        <dbReference type="FlyBase" id="FBgn0037170"/>
    </source>
</evidence>
<gene>
    <name evidence="6" type="primary">Trxr2</name>
    <name evidence="6" type="synonym">Trxr-2</name>
    <name evidence="6" type="ORF">CG11401</name>
</gene>
<sequence>MSTIKFLRSSTHNALRSSLGWCRLAASRPRYDYDLVVLGGGSAGLACAKEAAGCGARVLCFDYVKPTPVGTKWGIGGTCVNVGCIPKKLMHQASLLGEAVHEAVAYGWNVDDTNIRPDWRKLVRSVQNHIKSVNWVTRVDLRDKKVEYVNSMATFRDSHTIEYVAMPGAEHRQVTSEYVVVAVGGRPRYPDIPGAVELGITSDDIFSYEREPGRTLVVGAGYVGLECACFLKGLGYEPTVMVRSIVLRGFDRQMSELLAAMMTERGIPFLGTTIPKAVERQADGRLLVRYRNTTTQMDGSDVFDTVLWAIGRKGLIEDLNLDAAGVKTHDDKIVVDAAEATSVPHIFAVGDIIYGRPELTPVAILSGRLLARRLFAGSTQLMDYADVATTVFTPLEYSCVGMSEETAIELRGADNIEVFHGYYKPTEFFIPQKSVRHCYLKAVAEVSGDQKILGLHYIGPVAGEVIQGFAAALKTGLTVKTLLNTVGIHPTTAEEFTRLSITKRSGRDPTPASCCS</sequence>
<reference evidence="4 5" key="1">
    <citation type="submission" date="2000-02" db="EMBL/GenBank/DDBJ databases">
        <title>Drosophila melanogaster thioredoxin reductase 2.</title>
        <authorList>
            <person name="Kanzok S."/>
            <person name="Becker K."/>
            <person name="Schirmer R.H."/>
        </authorList>
    </citation>
    <scope>NUCLEOTIDE SEQUENCE</scope>
</reference>
<reference evidence="4" key="2">
    <citation type="journal article" date="2000" name="Science">
        <title>The genome sequence of Drosophila melanogaster.</title>
        <authorList>
            <person name="Adams M.D."/>
            <person name="Celniker S.E."/>
            <person name="Holt R.A."/>
            <person name="Evans C.A."/>
            <person name="Gocayne J.D."/>
            <person name="Amanatides P.G."/>
            <person name="Scherer S.E."/>
            <person name="Li P.W."/>
            <person name="Hoskins R.A."/>
            <person name="Galle R.F."/>
            <person name="George R.A."/>
            <person name="Lewis S.E."/>
            <person name="Richards S."/>
            <person name="Ashburner M."/>
            <person name="Henderson S.N."/>
            <person name="Sutton G.G."/>
            <person name="Wortman J.R."/>
            <person name="Yandell M.D."/>
            <person name="Zhang Q."/>
            <person name="Chen L.X."/>
            <person name="Brandon R.C."/>
            <person name="Rogers Y.-H.C."/>
            <person name="Blazej R.G."/>
            <person name="Champe M."/>
            <person name="Pfeiffer B.D."/>
            <person name="Wan K.H."/>
            <person name="Doyle C."/>
            <person name="Baxter E.G."/>
            <person name="Helt G."/>
            <person name="Nelson C.R."/>
            <person name="Miklos G.L.G."/>
            <person name="Abril J.F."/>
            <person name="Agbayani A."/>
            <person name="An H.-J."/>
            <person name="Andrews-Pfannkoch C."/>
            <person name="Baldwin D."/>
            <person name="Ballew R.M."/>
            <person name="Basu A."/>
            <person name="Baxendale J."/>
            <person name="Bayraktaroglu L."/>
            <person name="Beasley E.M."/>
            <person name="Beeson K.Y."/>
            <person name="Benos P.V."/>
            <person name="Berman B.P."/>
            <person name="Bhandari D."/>
            <person name="Bolshakov S."/>
            <person name="Borkova D."/>
            <person name="Botchan M.R."/>
            <person name="Bouck J."/>
            <person name="Brokstein P."/>
            <person name="Brottier P."/>
            <person name="Burtis K.C."/>
            <person name="Busam D.A."/>
            <person name="Butler H."/>
            <person name="Cadieu E."/>
            <person name="Center A."/>
            <person name="Chandra I."/>
            <person name="Cherry J.M."/>
            <person name="Cawley S."/>
            <person name="Dahlke C."/>
            <person name="Davenport L.B."/>
            <person name="Davies P."/>
            <person name="de Pablos B."/>
            <person name="Delcher A."/>
            <person name="Deng Z."/>
            <person name="Mays A.D."/>
            <person name="Dew I."/>
            <person name="Dietz S.M."/>
            <person name="Dodson K."/>
            <person name="Doup L.E."/>
            <person name="Downes M."/>
            <person name="Dugan-Rocha S."/>
            <person name="Dunkov B.C."/>
            <person name="Dunn P."/>
            <person name="Durbin K.J."/>
            <person name="Evangelista C.C."/>
            <person name="Ferraz C."/>
            <person name="Ferriera S."/>
            <person name="Fleischmann W."/>
            <person name="Fosler C."/>
            <person name="Gabrielian A.E."/>
            <person name="Garg N.S."/>
            <person name="Gelbart W.M."/>
            <person name="Glasser K."/>
            <person name="Glodek A."/>
            <person name="Gong F."/>
            <person name="Gorrell J.H."/>
            <person name="Gu Z."/>
            <person name="Guan P."/>
            <person name="Harris M."/>
            <person name="Harris N.L."/>
            <person name="Harvey D.A."/>
            <person name="Heiman T.J."/>
            <person name="Hernandez J.R."/>
            <person name="Houck J."/>
            <person name="Hostin D."/>
            <person name="Houston K.A."/>
            <person name="Howland T.J."/>
            <person name="Wei M.-H."/>
            <person name="Ibegwam C."/>
            <person name="Jalali M."/>
            <person name="Kalush F."/>
            <person name="Karpen G.H."/>
            <person name="Ke Z."/>
            <person name="Kennison J.A."/>
            <person name="Ketchum K.A."/>
            <person name="Kimmel B.E."/>
            <person name="Kodira C.D."/>
            <person name="Kraft C.L."/>
            <person name="Kravitz S."/>
            <person name="Kulp D."/>
            <person name="Lai Z."/>
            <person name="Lasko P."/>
            <person name="Lei Y."/>
            <person name="Levitsky A.A."/>
            <person name="Li J.H."/>
            <person name="Li Z."/>
            <person name="Liang Y."/>
            <person name="Lin X."/>
            <person name="Liu X."/>
            <person name="Mattei B."/>
            <person name="McIntosh T.C."/>
            <person name="McLeod M.P."/>
            <person name="McPherson D."/>
            <person name="Merkulov G."/>
            <person name="Milshina N.V."/>
            <person name="Mobarry C."/>
            <person name="Morris J."/>
            <person name="Moshrefi A."/>
            <person name="Mount S.M."/>
            <person name="Moy M."/>
            <person name="Murphy B."/>
            <person name="Murphy L."/>
            <person name="Muzny D.M."/>
            <person name="Nelson D.L."/>
            <person name="Nelson D.R."/>
            <person name="Nelson K.A."/>
            <person name="Nixon K."/>
            <person name="Nusskern D.R."/>
            <person name="Pacleb J.M."/>
            <person name="Palazzolo M."/>
            <person name="Pittman G.S."/>
            <person name="Pan S."/>
            <person name="Pollard J."/>
            <person name="Puri V."/>
            <person name="Reese M.G."/>
            <person name="Reinert K."/>
            <person name="Remington K."/>
            <person name="Saunders R.D.C."/>
            <person name="Scheeler F."/>
            <person name="Shen H."/>
            <person name="Shue B.C."/>
            <person name="Siden-Kiamos I."/>
            <person name="Simpson M."/>
            <person name="Skupski M.P."/>
            <person name="Smith T.J."/>
            <person name="Spier E."/>
            <person name="Spradling A.C."/>
            <person name="Stapleton M."/>
            <person name="Strong R."/>
            <person name="Sun E."/>
            <person name="Svirskas R."/>
            <person name="Tector C."/>
            <person name="Turner R."/>
            <person name="Venter E."/>
            <person name="Wang A.H."/>
            <person name="Wang X."/>
            <person name="Wang Z.-Y."/>
            <person name="Wassarman D.A."/>
            <person name="Weinstock G.M."/>
            <person name="Weissenbach J."/>
            <person name="Williams S.M."/>
            <person name="Woodage T."/>
            <person name="Worley K.C."/>
            <person name="Wu D."/>
            <person name="Yang S."/>
            <person name="Yao Q.A."/>
            <person name="Ye J."/>
            <person name="Yeh R.-F."/>
            <person name="Zaveri J.S."/>
            <person name="Zhan M."/>
            <person name="Zhang G."/>
            <person name="Zhao Q."/>
            <person name="Zheng L."/>
            <person name="Zheng X.H."/>
            <person name="Zhong F.N."/>
            <person name="Zhong W."/>
            <person name="Zhou X."/>
            <person name="Zhu S.C."/>
            <person name="Zhu X."/>
            <person name="Smith H.O."/>
            <person name="Gibbs R.A."/>
            <person name="Myers E.W."/>
            <person name="Rubin G.M."/>
            <person name="Venter J.C."/>
        </authorList>
    </citation>
    <scope>NUCLEOTIDE SEQUENCE [LARGE SCALE GENOMIC DNA]</scope>
    <source>
        <strain>Berkeley</strain>
    </source>
</reference>
<reference key="3">
    <citation type="journal article" date="2002" name="Genome Biol.">
        <title>Annotation of the Drosophila melanogaster euchromatic genome: a systematic review.</title>
        <authorList>
            <person name="Misra S."/>
            <person name="Crosby M.A."/>
            <person name="Mungall C.J."/>
            <person name="Matthews B.B."/>
            <person name="Campbell K.S."/>
            <person name="Hradecky P."/>
            <person name="Huang Y."/>
            <person name="Kaminker J.S."/>
            <person name="Millburn G.H."/>
            <person name="Prochnik S.E."/>
            <person name="Smith C.D."/>
            <person name="Tupy J.L."/>
            <person name="Whitfield E.J."/>
            <person name="Bayraktaroglu L."/>
            <person name="Berman B.P."/>
            <person name="Bettencourt B.R."/>
            <person name="Celniker S.E."/>
            <person name="de Grey A.D.N.J."/>
            <person name="Drysdale R.A."/>
            <person name="Harris N.L."/>
            <person name="Richter J."/>
            <person name="Russo S."/>
            <person name="Schroeder A.J."/>
            <person name="Shu S.Q."/>
            <person name="Stapleton M."/>
            <person name="Yamada C."/>
            <person name="Ashburner M."/>
            <person name="Gelbart W.M."/>
            <person name="Rubin G.M."/>
            <person name="Lewis S.E."/>
        </authorList>
    </citation>
    <scope>GENOME REANNOTATION</scope>
    <source>
        <strain>Berkeley</strain>
    </source>
</reference>
<reference key="4">
    <citation type="journal article" date="2002" name="Genome Biol.">
        <title>A Drosophila full-length cDNA resource.</title>
        <authorList>
            <person name="Stapleton M."/>
            <person name="Carlson J.W."/>
            <person name="Brokstein P."/>
            <person name="Yu C."/>
            <person name="Champe M."/>
            <person name="George R.A."/>
            <person name="Guarin H."/>
            <person name="Kronmiller B."/>
            <person name="Pacleb J.M."/>
            <person name="Park S."/>
            <person name="Wan K.H."/>
            <person name="Rubin G.M."/>
            <person name="Celniker S.E."/>
        </authorList>
    </citation>
    <scope>NUCLEOTIDE SEQUENCE [LARGE SCALE MRNA]</scope>
    <source>
        <strain>Berkeley</strain>
        <tissue>Testis</tissue>
    </source>
</reference>
<comment type="function">
    <text evidence="2">Thioredoxin system is a major player in glutathione metabolism, due to the demonstrated absence of a glutathione reductase. Functionally interacts with the Sod/Cat reactive oxidation species (ROS) defense system and thereby has a role in preadult development and life span. Lack of a glutathione reductase suggests antioxidant defense in Drosophila, and probably in related insects, differs fundamentally from that in other organisms.</text>
</comment>
<comment type="catalytic activity">
    <reaction evidence="2">
        <text>[thioredoxin]-dithiol + NADP(+) = [thioredoxin]-disulfide + NADPH + H(+)</text>
        <dbReference type="Rhea" id="RHEA:20345"/>
        <dbReference type="Rhea" id="RHEA-COMP:10698"/>
        <dbReference type="Rhea" id="RHEA-COMP:10700"/>
        <dbReference type="ChEBI" id="CHEBI:15378"/>
        <dbReference type="ChEBI" id="CHEBI:29950"/>
        <dbReference type="ChEBI" id="CHEBI:50058"/>
        <dbReference type="ChEBI" id="CHEBI:57783"/>
        <dbReference type="ChEBI" id="CHEBI:58349"/>
        <dbReference type="EC" id="1.8.1.9"/>
    </reaction>
</comment>
<comment type="cofactor">
    <cofactor evidence="1">
        <name>FAD</name>
        <dbReference type="ChEBI" id="CHEBI:57692"/>
    </cofactor>
    <text evidence="1">Binds 1 FAD per subunit.</text>
</comment>
<comment type="subunit">
    <text evidence="2">Homodimer.</text>
</comment>
<comment type="subcellular location">
    <subcellularLocation>
        <location>Mitochondrion</location>
    </subcellularLocation>
</comment>
<comment type="miscellaneous">
    <text>The active site is a redox-active disulfide bond.</text>
</comment>
<comment type="similarity">
    <text evidence="4">Belongs to the class-I pyridine nucleotide-disulfide oxidoreductase family.</text>
</comment>
<name>TRXR2_DROME</name>
<keyword id="KW-1015">Disulfide bond</keyword>
<keyword id="KW-0274">FAD</keyword>
<keyword id="KW-0285">Flavoprotein</keyword>
<keyword id="KW-0496">Mitochondrion</keyword>
<keyword id="KW-0521">NADP</keyword>
<keyword id="KW-0560">Oxidoreductase</keyword>
<keyword id="KW-0676">Redox-active center</keyword>
<keyword id="KW-1185">Reference proteome</keyword>
<keyword id="KW-0809">Transit peptide</keyword>
<organism evidence="5">
    <name type="scientific">Drosophila melanogaster</name>
    <name type="common">Fruit fly</name>
    <dbReference type="NCBI Taxonomy" id="7227"/>
    <lineage>
        <taxon>Eukaryota</taxon>
        <taxon>Metazoa</taxon>
        <taxon>Ecdysozoa</taxon>
        <taxon>Arthropoda</taxon>
        <taxon>Hexapoda</taxon>
        <taxon>Insecta</taxon>
        <taxon>Pterygota</taxon>
        <taxon>Neoptera</taxon>
        <taxon>Endopterygota</taxon>
        <taxon>Diptera</taxon>
        <taxon>Brachycera</taxon>
        <taxon>Muscomorpha</taxon>
        <taxon>Ephydroidea</taxon>
        <taxon>Drosophilidae</taxon>
        <taxon>Drosophila</taxon>
        <taxon>Sophophora</taxon>
    </lineage>
</organism>
<protein>
    <recommendedName>
        <fullName evidence="6">Thioredoxin reductase 2, mitochondrial</fullName>
        <ecNumber>1.8.1.9</ecNumber>
    </recommendedName>
</protein>
<dbReference type="EC" id="1.8.1.9"/>
<dbReference type="EMBL" id="AF236866">
    <property type="protein sequence ID" value="AAF64152.1"/>
    <property type="molecule type" value="Genomic_DNA"/>
</dbReference>
<dbReference type="EMBL" id="AE014296">
    <property type="protein sequence ID" value="AAF51835.1"/>
    <property type="molecule type" value="Genomic_DNA"/>
</dbReference>
<dbReference type="EMBL" id="AY121613">
    <property type="protein sequence ID" value="AAM51940.1"/>
    <property type="molecule type" value="mRNA"/>
</dbReference>
<dbReference type="RefSeq" id="NP_524216.1">
    <property type="nucleotide sequence ID" value="NM_079492.3"/>
</dbReference>
<dbReference type="SMR" id="Q9VNT5"/>
<dbReference type="BioGRID" id="65709">
    <property type="interactions" value="2"/>
</dbReference>
<dbReference type="DIP" id="DIP-19796N"/>
<dbReference type="FunCoup" id="Q9VNT5">
    <property type="interactions" value="951"/>
</dbReference>
<dbReference type="IntAct" id="Q9VNT5">
    <property type="interactions" value="4"/>
</dbReference>
<dbReference type="STRING" id="7227.FBpp0078166"/>
<dbReference type="GlyGen" id="Q9VNT5">
    <property type="glycosylation" value="2 sites"/>
</dbReference>
<dbReference type="PaxDb" id="7227-FBpp0078166"/>
<dbReference type="DNASU" id="40475"/>
<dbReference type="EnsemblMetazoa" id="FBtr0078514">
    <property type="protein sequence ID" value="FBpp0078166"/>
    <property type="gene ID" value="FBgn0037170"/>
</dbReference>
<dbReference type="GeneID" id="40475"/>
<dbReference type="KEGG" id="dme:Dmel_CG11401"/>
<dbReference type="AGR" id="FB:FBgn0037170"/>
<dbReference type="CTD" id="40475"/>
<dbReference type="FlyBase" id="FBgn0037170">
    <property type="gene designation" value="Trxr2"/>
</dbReference>
<dbReference type="VEuPathDB" id="VectorBase:FBgn0037170"/>
<dbReference type="eggNOG" id="KOG4716">
    <property type="taxonomic scope" value="Eukaryota"/>
</dbReference>
<dbReference type="GeneTree" id="ENSGT00940000167606"/>
<dbReference type="HOGENOM" id="CLU_016755_2_4_1"/>
<dbReference type="InParanoid" id="Q9VNT5"/>
<dbReference type="OMA" id="CFDYVKP"/>
<dbReference type="OrthoDB" id="5956163at2759"/>
<dbReference type="PhylomeDB" id="Q9VNT5"/>
<dbReference type="BioGRID-ORCS" id="40475">
    <property type="hits" value="0 hits in 3 CRISPR screens"/>
</dbReference>
<dbReference type="ChiTaRS" id="Trxr-2">
    <property type="organism name" value="fly"/>
</dbReference>
<dbReference type="GenomeRNAi" id="40475"/>
<dbReference type="PRO" id="PR:Q9VNT5"/>
<dbReference type="Proteomes" id="UP000000803">
    <property type="component" value="Chromosome 3L"/>
</dbReference>
<dbReference type="Bgee" id="FBgn0037170">
    <property type="expression patterns" value="Expressed in early elongation stage spermatid (Drosophila) in testis and 17 other cell types or tissues"/>
</dbReference>
<dbReference type="GO" id="GO:0005737">
    <property type="term" value="C:cytoplasm"/>
    <property type="evidence" value="ECO:0000318"/>
    <property type="project" value="GO_Central"/>
</dbReference>
<dbReference type="GO" id="GO:0005829">
    <property type="term" value="C:cytosol"/>
    <property type="evidence" value="ECO:0000318"/>
    <property type="project" value="GO_Central"/>
</dbReference>
<dbReference type="GO" id="GO:0005739">
    <property type="term" value="C:mitochondrion"/>
    <property type="evidence" value="ECO:0000250"/>
    <property type="project" value="FlyBase"/>
</dbReference>
<dbReference type="GO" id="GO:0050660">
    <property type="term" value="F:flavin adenine dinucleotide binding"/>
    <property type="evidence" value="ECO:0007669"/>
    <property type="project" value="InterPro"/>
</dbReference>
<dbReference type="GO" id="GO:0004791">
    <property type="term" value="F:thioredoxin-disulfide reductase (NADPH) activity"/>
    <property type="evidence" value="ECO:0000314"/>
    <property type="project" value="FlyBase"/>
</dbReference>
<dbReference type="GO" id="GO:0045454">
    <property type="term" value="P:cell redox homeostasis"/>
    <property type="evidence" value="ECO:0000250"/>
    <property type="project" value="FlyBase"/>
</dbReference>
<dbReference type="FunFam" id="3.50.50.60:FF:000190">
    <property type="entry name" value="Thioredoxin reductase"/>
    <property type="match status" value="1"/>
</dbReference>
<dbReference type="FunFam" id="3.30.390.30:FF:000004">
    <property type="entry name" value="Thioredoxin reductase 1, cytoplasmic"/>
    <property type="match status" value="1"/>
</dbReference>
<dbReference type="Gene3D" id="3.30.390.30">
    <property type="match status" value="1"/>
</dbReference>
<dbReference type="Gene3D" id="3.50.50.60">
    <property type="entry name" value="FAD/NAD(P)-binding domain"/>
    <property type="match status" value="2"/>
</dbReference>
<dbReference type="InterPro" id="IPR036188">
    <property type="entry name" value="FAD/NAD-bd_sf"/>
</dbReference>
<dbReference type="InterPro" id="IPR023753">
    <property type="entry name" value="FAD/NAD-binding_dom"/>
</dbReference>
<dbReference type="InterPro" id="IPR016156">
    <property type="entry name" value="FAD/NAD-linked_Rdtase_dimer_sf"/>
</dbReference>
<dbReference type="InterPro" id="IPR046952">
    <property type="entry name" value="GSHR/TRXR-like"/>
</dbReference>
<dbReference type="InterPro" id="IPR001100">
    <property type="entry name" value="Pyr_nuc-diS_OxRdtase"/>
</dbReference>
<dbReference type="InterPro" id="IPR004099">
    <property type="entry name" value="Pyr_nucl-diS_OxRdtase_dimer"/>
</dbReference>
<dbReference type="InterPro" id="IPR012999">
    <property type="entry name" value="Pyr_OxRdtase_I_AS"/>
</dbReference>
<dbReference type="InterPro" id="IPR006338">
    <property type="entry name" value="Thioredoxin/glutathione_Rdtase"/>
</dbReference>
<dbReference type="NCBIfam" id="TIGR01438">
    <property type="entry name" value="TGR"/>
    <property type="match status" value="1"/>
</dbReference>
<dbReference type="PANTHER" id="PTHR42737">
    <property type="entry name" value="GLUTATHIONE REDUCTASE"/>
    <property type="match status" value="1"/>
</dbReference>
<dbReference type="PANTHER" id="PTHR42737:SF7">
    <property type="entry name" value="THIOREDOXIN-DISULFIDE REDUCTASE"/>
    <property type="match status" value="1"/>
</dbReference>
<dbReference type="Pfam" id="PF07992">
    <property type="entry name" value="Pyr_redox_2"/>
    <property type="match status" value="1"/>
</dbReference>
<dbReference type="Pfam" id="PF02852">
    <property type="entry name" value="Pyr_redox_dim"/>
    <property type="match status" value="1"/>
</dbReference>
<dbReference type="PIRSF" id="PIRSF000350">
    <property type="entry name" value="Mercury_reductase_MerA"/>
    <property type="match status" value="1"/>
</dbReference>
<dbReference type="PRINTS" id="PR00368">
    <property type="entry name" value="FADPNR"/>
</dbReference>
<dbReference type="PRINTS" id="PR00411">
    <property type="entry name" value="PNDRDTASEI"/>
</dbReference>
<dbReference type="SUPFAM" id="SSF51905">
    <property type="entry name" value="FAD/NAD(P)-binding domain"/>
    <property type="match status" value="1"/>
</dbReference>
<dbReference type="SUPFAM" id="SSF55424">
    <property type="entry name" value="FAD/NAD-linked reductases, dimerisation (C-terminal) domain"/>
    <property type="match status" value="1"/>
</dbReference>
<dbReference type="PROSITE" id="PS00076">
    <property type="entry name" value="PYRIDINE_REDOX_1"/>
    <property type="match status" value="1"/>
</dbReference>
<proteinExistence type="evidence at transcript level"/>
<accession>Q9VNT5</accession>